<evidence type="ECO:0000250" key="1"/>
<evidence type="ECO:0000255" key="2"/>
<evidence type="ECO:0000255" key="3">
    <source>
        <dbReference type="PROSITE-ProRule" id="PRU00190"/>
    </source>
</evidence>
<evidence type="ECO:0000256" key="4">
    <source>
        <dbReference type="SAM" id="MobiDB-lite"/>
    </source>
</evidence>
<evidence type="ECO:0000269" key="5">
    <source>
    </source>
</evidence>
<evidence type="ECO:0000269" key="6">
    <source>
    </source>
</evidence>
<accession>Q54IV4</accession>
<comment type="function">
    <text evidence="1">Probable methyltransferase.</text>
</comment>
<comment type="induction">
    <text evidence="5 6">Down-regulated by phagocytic stimuli and up-regulated by Pseudomonas aeruginosa, PAO1 strain and PA14 strain infection.</text>
</comment>
<comment type="similarity">
    <text evidence="3">Belongs to the class V-like SAM-binding methyltransferase superfamily.</text>
</comment>
<organism>
    <name type="scientific">Dictyostelium discoideum</name>
    <name type="common">Social amoeba</name>
    <dbReference type="NCBI Taxonomy" id="44689"/>
    <lineage>
        <taxon>Eukaryota</taxon>
        <taxon>Amoebozoa</taxon>
        <taxon>Evosea</taxon>
        <taxon>Eumycetozoa</taxon>
        <taxon>Dictyostelia</taxon>
        <taxon>Dictyosteliales</taxon>
        <taxon>Dictyosteliaceae</taxon>
        <taxon>Dictyostelium</taxon>
    </lineage>
</organism>
<dbReference type="EC" id="2.1.1.-"/>
<dbReference type="EMBL" id="AAFI02000112">
    <property type="protein sequence ID" value="EAL63196.1"/>
    <property type="molecule type" value="Genomic_DNA"/>
</dbReference>
<dbReference type="RefSeq" id="XP_636699.1">
    <property type="nucleotide sequence ID" value="XM_631607.1"/>
</dbReference>
<dbReference type="FunCoup" id="Q54IV4">
    <property type="interactions" value="178"/>
</dbReference>
<dbReference type="STRING" id="44689.Q54IV4"/>
<dbReference type="PaxDb" id="44689-DDB0187960"/>
<dbReference type="EnsemblProtists" id="EAL63196">
    <property type="protein sequence ID" value="EAL63196"/>
    <property type="gene ID" value="DDB_G0288495"/>
</dbReference>
<dbReference type="GeneID" id="8626656"/>
<dbReference type="KEGG" id="ddi:DDB_G0288495"/>
<dbReference type="dictyBase" id="DDB_G0288495">
    <property type="gene designation" value="smdA"/>
</dbReference>
<dbReference type="VEuPathDB" id="AmoebaDB:DDB_G0288495"/>
<dbReference type="eggNOG" id="ENOG502RBX6">
    <property type="taxonomic scope" value="Eukaryota"/>
</dbReference>
<dbReference type="HOGENOM" id="CLU_512351_0_0_1"/>
<dbReference type="InParanoid" id="Q54IV4"/>
<dbReference type="OMA" id="ELECKWI"/>
<dbReference type="Reactome" id="R-DDI-3214841">
    <property type="pathway name" value="PKMTs methylate histone lysines"/>
</dbReference>
<dbReference type="PRO" id="PR:Q54IV4"/>
<dbReference type="Proteomes" id="UP000002195">
    <property type="component" value="Chromosome 5"/>
</dbReference>
<dbReference type="GO" id="GO:0005634">
    <property type="term" value="C:nucleus"/>
    <property type="evidence" value="ECO:0000318"/>
    <property type="project" value="GO_Central"/>
</dbReference>
<dbReference type="GO" id="GO:0008168">
    <property type="term" value="F:methyltransferase activity"/>
    <property type="evidence" value="ECO:0007669"/>
    <property type="project" value="UniProtKB-KW"/>
</dbReference>
<dbReference type="GO" id="GO:0008270">
    <property type="term" value="F:zinc ion binding"/>
    <property type="evidence" value="ECO:0007669"/>
    <property type="project" value="UniProtKB-KW"/>
</dbReference>
<dbReference type="GO" id="GO:0032259">
    <property type="term" value="P:methylation"/>
    <property type="evidence" value="ECO:0007669"/>
    <property type="project" value="UniProtKB-KW"/>
</dbReference>
<dbReference type="GO" id="GO:1901261">
    <property type="term" value="P:regulation of sorocarp spore cell differentiation"/>
    <property type="evidence" value="ECO:0000315"/>
    <property type="project" value="dictyBase"/>
</dbReference>
<dbReference type="CDD" id="cd20071">
    <property type="entry name" value="SET_SMYD"/>
    <property type="match status" value="1"/>
</dbReference>
<dbReference type="Gene3D" id="2.170.270.10">
    <property type="entry name" value="SET domain"/>
    <property type="match status" value="1"/>
</dbReference>
<dbReference type="InterPro" id="IPR050869">
    <property type="entry name" value="H3K4_H4K5_MeTrfase"/>
</dbReference>
<dbReference type="InterPro" id="IPR001214">
    <property type="entry name" value="SET_dom"/>
</dbReference>
<dbReference type="InterPro" id="IPR046341">
    <property type="entry name" value="SET_dom_sf"/>
</dbReference>
<dbReference type="InterPro" id="IPR002893">
    <property type="entry name" value="Znf_MYND"/>
</dbReference>
<dbReference type="PANTHER" id="PTHR12197">
    <property type="entry name" value="HISTONE-LYSINE N-METHYLTRANSFERASE SMYD"/>
    <property type="match status" value="1"/>
</dbReference>
<dbReference type="PANTHER" id="PTHR12197:SF296">
    <property type="entry name" value="SET AND MYND DOMAIN-CONTAINING PROTEIN DDB_G0288495"/>
    <property type="match status" value="1"/>
</dbReference>
<dbReference type="Pfam" id="PF00856">
    <property type="entry name" value="SET"/>
    <property type="match status" value="1"/>
</dbReference>
<dbReference type="SMART" id="SM00317">
    <property type="entry name" value="SET"/>
    <property type="match status" value="1"/>
</dbReference>
<dbReference type="SUPFAM" id="SSF82199">
    <property type="entry name" value="SET domain"/>
    <property type="match status" value="1"/>
</dbReference>
<dbReference type="PROSITE" id="PS50280">
    <property type="entry name" value="SET"/>
    <property type="match status" value="1"/>
</dbReference>
<dbReference type="PROSITE" id="PS01360">
    <property type="entry name" value="ZF_MYND_1"/>
    <property type="match status" value="1"/>
</dbReference>
<protein>
    <recommendedName>
        <fullName>SET and MYND domain-containing protein DDB_G0288495</fullName>
        <ecNumber>2.1.1.-</ecNumber>
    </recommendedName>
</protein>
<feature type="chain" id="PRO_0000389434" description="SET and MYND domain-containing protein DDB_G0288495">
    <location>
        <begin position="1"/>
        <end position="532"/>
    </location>
</feature>
<feature type="domain" description="SET" evidence="3">
    <location>
        <begin position="25"/>
        <end position="448"/>
    </location>
</feature>
<feature type="zinc finger region" description="MYND-type; degenerate">
    <location>
        <begin position="70"/>
        <end position="116"/>
    </location>
</feature>
<feature type="region of interest" description="Disordered" evidence="4">
    <location>
        <begin position="204"/>
        <end position="234"/>
    </location>
</feature>
<feature type="coiled-coil region" evidence="2">
    <location>
        <begin position="199"/>
        <end position="240"/>
    </location>
</feature>
<feature type="compositionally biased region" description="Acidic residues" evidence="4">
    <location>
        <begin position="207"/>
        <end position="217"/>
    </location>
</feature>
<reference key="1">
    <citation type="journal article" date="2005" name="Nature">
        <title>The genome of the social amoeba Dictyostelium discoideum.</title>
        <authorList>
            <person name="Eichinger L."/>
            <person name="Pachebat J.A."/>
            <person name="Gloeckner G."/>
            <person name="Rajandream M.A."/>
            <person name="Sucgang R."/>
            <person name="Berriman M."/>
            <person name="Song J."/>
            <person name="Olsen R."/>
            <person name="Szafranski K."/>
            <person name="Xu Q."/>
            <person name="Tunggal B."/>
            <person name="Kummerfeld S."/>
            <person name="Madera M."/>
            <person name="Konfortov B.A."/>
            <person name="Rivero F."/>
            <person name="Bankier A.T."/>
            <person name="Lehmann R."/>
            <person name="Hamlin N."/>
            <person name="Davies R."/>
            <person name="Gaudet P."/>
            <person name="Fey P."/>
            <person name="Pilcher K."/>
            <person name="Chen G."/>
            <person name="Saunders D."/>
            <person name="Sodergren E.J."/>
            <person name="Davis P."/>
            <person name="Kerhornou A."/>
            <person name="Nie X."/>
            <person name="Hall N."/>
            <person name="Anjard C."/>
            <person name="Hemphill L."/>
            <person name="Bason N."/>
            <person name="Farbrother P."/>
            <person name="Desany B."/>
            <person name="Just E."/>
            <person name="Morio T."/>
            <person name="Rost R."/>
            <person name="Churcher C.M."/>
            <person name="Cooper J."/>
            <person name="Haydock S."/>
            <person name="van Driessche N."/>
            <person name="Cronin A."/>
            <person name="Goodhead I."/>
            <person name="Muzny D.M."/>
            <person name="Mourier T."/>
            <person name="Pain A."/>
            <person name="Lu M."/>
            <person name="Harper D."/>
            <person name="Lindsay R."/>
            <person name="Hauser H."/>
            <person name="James K.D."/>
            <person name="Quiles M."/>
            <person name="Madan Babu M."/>
            <person name="Saito T."/>
            <person name="Buchrieser C."/>
            <person name="Wardroper A."/>
            <person name="Felder M."/>
            <person name="Thangavelu M."/>
            <person name="Johnson D."/>
            <person name="Knights A."/>
            <person name="Loulseged H."/>
            <person name="Mungall K.L."/>
            <person name="Oliver K."/>
            <person name="Price C."/>
            <person name="Quail M.A."/>
            <person name="Urushihara H."/>
            <person name="Hernandez J."/>
            <person name="Rabbinowitsch E."/>
            <person name="Steffen D."/>
            <person name="Sanders M."/>
            <person name="Ma J."/>
            <person name="Kohara Y."/>
            <person name="Sharp S."/>
            <person name="Simmonds M.N."/>
            <person name="Spiegler S."/>
            <person name="Tivey A."/>
            <person name="Sugano S."/>
            <person name="White B."/>
            <person name="Walker D."/>
            <person name="Woodward J.R."/>
            <person name="Winckler T."/>
            <person name="Tanaka Y."/>
            <person name="Shaulsky G."/>
            <person name="Schleicher M."/>
            <person name="Weinstock G.M."/>
            <person name="Rosenthal A."/>
            <person name="Cox E.C."/>
            <person name="Chisholm R.L."/>
            <person name="Gibbs R.A."/>
            <person name="Loomis W.F."/>
            <person name="Platzer M."/>
            <person name="Kay R.R."/>
            <person name="Williams J.G."/>
            <person name="Dear P.H."/>
            <person name="Noegel A.A."/>
            <person name="Barrell B.G."/>
            <person name="Kuspa A."/>
        </authorList>
    </citation>
    <scope>NUCLEOTIDE SEQUENCE [LARGE SCALE GENOMIC DNA]</scope>
    <source>
        <strain>AX4</strain>
    </source>
</reference>
<reference key="2">
    <citation type="journal article" date="2008" name="BMC Microbiol.">
        <title>Dictyostelium transcriptional responses to Pseudomonas aeruginosa: common and specific effects from PAO1 and PA14 strains.</title>
        <authorList>
            <person name="Carilla-Latorre S."/>
            <person name="Calvo-Garrido J."/>
            <person name="Bloomfield G."/>
            <person name="Skelton J."/>
            <person name="Kay R.R."/>
            <person name="Ivens A."/>
            <person name="Martinez J.L."/>
            <person name="Escalante R."/>
        </authorList>
    </citation>
    <scope>INDUCTION [LARGE SCALE ANALYSIS]</scope>
</reference>
<reference key="3">
    <citation type="journal article" date="2008" name="BMC Genomics">
        <title>Genome-wide transcriptional changes induced by phagocytosis or growth on bacteria in Dictyostelium.</title>
        <authorList>
            <person name="Sillo A."/>
            <person name="Bloomfield G."/>
            <person name="Balest A."/>
            <person name="Balbo A."/>
            <person name="Pergolizzi B."/>
            <person name="Peracino B."/>
            <person name="Skelton J."/>
            <person name="Ivens A."/>
            <person name="Bozzaro S."/>
        </authorList>
    </citation>
    <scope>INDUCTION [LARGE SCALE ANALYSIS]</scope>
</reference>
<proteinExistence type="evidence at transcript level"/>
<keyword id="KW-0175">Coiled coil</keyword>
<keyword id="KW-0479">Metal-binding</keyword>
<keyword id="KW-0489">Methyltransferase</keyword>
<keyword id="KW-1185">Reference proteome</keyword>
<keyword id="KW-0949">S-adenosyl-L-methionine</keyword>
<keyword id="KW-0808">Transferase</keyword>
<keyword id="KW-0862">Zinc</keyword>
<keyword id="KW-0863">Zinc-finger</keyword>
<name>Y8495_DICDI</name>
<sequence>MISYEYCDSSDSFYFNDIQDFDFNPWIEVKSVSEKGRCVFSKKFIPKGTMVFRDIPYAAIVDNQFKRNICTTCFKILLESNRHNFQTCPSCFQVNYCSNYCKQYSKIETKHTELECKWIQDFTVSFKHQMAEDDRNIVLLVLKILARRIHEKQSTIFHNKPLTTNTFETCTSNNNNIDLLPMIPNDIPDLIDHLDDYFINSKNNNEFENEEEEEEEQEQKGEGEQEENENNENNEKVKKKVIIIDDNEKEKEEIKKFNKIWKNDFKRLINIAKVIQIIIDDSIDSLENIKCDYGFVDNQGDTEMVDNSIDPKGLDKLVDNLSSSDLNILRLLCKIRANYFGLWNSAYKPIPLNSIDDDDDDNNNNKEKPNNDYLWCGSGVYLKLSLFNHSCFPNCTTLIEYNINKKNSNNNNGNNGNNNSYGDTNQLTISIITLRDIEENQELLITYIPLNQKINDRVKSLKSNWLFQCDCKRCHFEKINENQTEKIYKDSCCTNQKCSGGLLIPLEQNSTQGICRVCKNTYTLPTVFYPLK</sequence>
<gene>
    <name type="ORF">DDB_G0288495</name>
</gene>